<evidence type="ECO:0000250" key="1"/>
<evidence type="ECO:0000255" key="2"/>
<evidence type="ECO:0000256" key="3">
    <source>
        <dbReference type="SAM" id="MobiDB-lite"/>
    </source>
</evidence>
<evidence type="ECO:0000269" key="4">
    <source>
    </source>
</evidence>
<evidence type="ECO:0000269" key="5">
    <source>
    </source>
</evidence>
<evidence type="ECO:0000269" key="6">
    <source>
    </source>
</evidence>
<evidence type="ECO:0000305" key="7"/>
<reference key="1">
    <citation type="journal article" date="1994" name="Yeast">
        <title>Sequence analysis of a 40.2 kb DNA fragment located near the left telomere of yeast chromosome X.</title>
        <authorList>
            <person name="Vandenbol M."/>
            <person name="Durand P."/>
            <person name="Bolle P.-A."/>
            <person name="Dion C."/>
            <person name="Portetelle D."/>
            <person name="Hilger F."/>
        </authorList>
    </citation>
    <scope>NUCLEOTIDE SEQUENCE [GENOMIC DNA]</scope>
    <source>
        <strain>ATCC 204508 / S288c</strain>
    </source>
</reference>
<reference key="2">
    <citation type="journal article" date="1996" name="EMBO J.">
        <title>Complete nucleotide sequence of Saccharomyces cerevisiae chromosome X.</title>
        <authorList>
            <person name="Galibert F."/>
            <person name="Alexandraki D."/>
            <person name="Baur A."/>
            <person name="Boles E."/>
            <person name="Chalwatzis N."/>
            <person name="Chuat J.-C."/>
            <person name="Coster F."/>
            <person name="Cziepluch C."/>
            <person name="de Haan M."/>
            <person name="Domdey H."/>
            <person name="Durand P."/>
            <person name="Entian K.-D."/>
            <person name="Gatius M."/>
            <person name="Goffeau A."/>
            <person name="Grivell L.A."/>
            <person name="Hennemann A."/>
            <person name="Herbert C.J."/>
            <person name="Heumann K."/>
            <person name="Hilger F."/>
            <person name="Hollenberg C.P."/>
            <person name="Huang M.-E."/>
            <person name="Jacq C."/>
            <person name="Jauniaux J.-C."/>
            <person name="Katsoulou C."/>
            <person name="Kirchrath L."/>
            <person name="Kleine K."/>
            <person name="Kordes E."/>
            <person name="Koetter P."/>
            <person name="Liebl S."/>
            <person name="Louis E.J."/>
            <person name="Manus V."/>
            <person name="Mewes H.-W."/>
            <person name="Miosga T."/>
            <person name="Obermaier B."/>
            <person name="Perea J."/>
            <person name="Pohl T.M."/>
            <person name="Portetelle D."/>
            <person name="Pujol A."/>
            <person name="Purnelle B."/>
            <person name="Ramezani Rad M."/>
            <person name="Rasmussen S.W."/>
            <person name="Rose M."/>
            <person name="Rossau R."/>
            <person name="Schaaff-Gerstenschlaeger I."/>
            <person name="Smits P.H.M."/>
            <person name="Scarcez T."/>
            <person name="Soriano N."/>
            <person name="To Van D."/>
            <person name="Tzermia M."/>
            <person name="Van Broekhoven A."/>
            <person name="Vandenbol M."/>
            <person name="Wedler H."/>
            <person name="von Wettstein D."/>
            <person name="Wambutt R."/>
            <person name="Zagulski M."/>
            <person name="Zollner A."/>
            <person name="Karpfinger-Hartl L."/>
        </authorList>
    </citation>
    <scope>NUCLEOTIDE SEQUENCE [LARGE SCALE GENOMIC DNA]</scope>
    <source>
        <strain>ATCC 204508 / S288c</strain>
    </source>
</reference>
<reference key="3">
    <citation type="journal article" date="2014" name="G3 (Bethesda)">
        <title>The reference genome sequence of Saccharomyces cerevisiae: Then and now.</title>
        <authorList>
            <person name="Engel S.R."/>
            <person name="Dietrich F.S."/>
            <person name="Fisk D.G."/>
            <person name="Binkley G."/>
            <person name="Balakrishnan R."/>
            <person name="Costanzo M.C."/>
            <person name="Dwight S.S."/>
            <person name="Hitz B.C."/>
            <person name="Karra K."/>
            <person name="Nash R.S."/>
            <person name="Weng S."/>
            <person name="Wong E.D."/>
            <person name="Lloyd P."/>
            <person name="Skrzypek M.S."/>
            <person name="Miyasato S.R."/>
            <person name="Simison M."/>
            <person name="Cherry J.M."/>
        </authorList>
    </citation>
    <scope>GENOME REANNOTATION</scope>
    <source>
        <strain>ATCC 204508 / S288c</strain>
    </source>
</reference>
<reference key="4">
    <citation type="journal article" date="1996" name="J. Biol. Chem.">
        <title>Multiple pathways for vacuolar sorting of yeast proteinase A.</title>
        <authorList>
            <person name="Westphal V."/>
            <person name="Marcusson E.G."/>
            <person name="Winther J.R."/>
            <person name="Emr S.D."/>
            <person name="van den Hazel H.B."/>
        </authorList>
    </citation>
    <scope>FUNCTION</scope>
</reference>
<reference key="5">
    <citation type="journal article" date="1996" name="J. Cell Biol.">
        <title>Vps10p cycles between the late-Golgi and prevacuolar compartments in its function as the sorting receptor for multiple yeast vacuolar hydrolases.</title>
        <authorList>
            <person name="Cooper A.A."/>
            <person name="Stevens T.H."/>
        </authorList>
    </citation>
    <scope>FUNCTION</scope>
</reference>
<reference key="6">
    <citation type="journal article" date="2003" name="Nature">
        <title>Global analysis of protein expression in yeast.</title>
        <authorList>
            <person name="Ghaemmaghami S."/>
            <person name="Huh W.-K."/>
            <person name="Bower K."/>
            <person name="Howson R.W."/>
            <person name="Belle A."/>
            <person name="Dephoure N."/>
            <person name="O'Shea E.K."/>
            <person name="Weissman J.S."/>
        </authorList>
    </citation>
    <scope>LEVEL OF PROTEIN EXPRESSION [LARGE SCALE ANALYSIS]</scope>
</reference>
<feature type="signal peptide" evidence="2">
    <location>
        <begin position="1"/>
        <end position="21"/>
    </location>
</feature>
<feature type="chain" id="PRO_0000014331" description="VPS10 homolog 2">
    <location>
        <begin position="22"/>
        <end position="1549"/>
    </location>
</feature>
<feature type="topological domain" description="Lumenal" evidence="2">
    <location>
        <begin position="22"/>
        <end position="1369"/>
    </location>
</feature>
<feature type="transmembrane region" description="Helical" evidence="2">
    <location>
        <begin position="1370"/>
        <end position="1390"/>
    </location>
</feature>
<feature type="topological domain" description="Cytoplasmic" evidence="2">
    <location>
        <begin position="1391"/>
        <end position="1549"/>
    </location>
</feature>
<feature type="repeat" description="BNR 1">
    <location>
        <begin position="57"/>
        <end position="68"/>
    </location>
</feature>
<feature type="repeat" description="BNR 2">
    <location>
        <begin position="101"/>
        <end position="112"/>
    </location>
</feature>
<feature type="repeat" description="BNR 3">
    <location>
        <begin position="159"/>
        <end position="170"/>
    </location>
</feature>
<feature type="repeat" description="BNR 4">
    <location>
        <begin position="228"/>
        <end position="239"/>
    </location>
</feature>
<feature type="repeat" description="BNR 5">
    <location>
        <begin position="393"/>
        <end position="404"/>
    </location>
</feature>
<feature type="repeat" description="BNR 6">
    <location>
        <begin position="465"/>
        <end position="476"/>
    </location>
</feature>
<feature type="repeat" description="BNR 7">
    <location>
        <begin position="511"/>
        <end position="522"/>
    </location>
</feature>
<feature type="repeat" description="BNR 8">
    <location>
        <begin position="740"/>
        <end position="751"/>
    </location>
</feature>
<feature type="repeat" description="BNR 9">
    <location>
        <begin position="837"/>
        <end position="848"/>
    </location>
</feature>
<feature type="repeat" description="BNR 10">
    <location>
        <begin position="1040"/>
        <end position="1051"/>
    </location>
</feature>
<feature type="repeat" description="BNR 11">
    <location>
        <begin position="1119"/>
        <end position="1130"/>
    </location>
</feature>
<feature type="repeat" description="BNR 12">
    <location>
        <begin position="1160"/>
        <end position="1171"/>
    </location>
</feature>
<feature type="region of interest" description="Disordered" evidence="3">
    <location>
        <begin position="1479"/>
        <end position="1549"/>
    </location>
</feature>
<feature type="compositionally biased region" description="Polar residues" evidence="3">
    <location>
        <begin position="1489"/>
        <end position="1501"/>
    </location>
</feature>
<feature type="compositionally biased region" description="Basic and acidic residues" evidence="3">
    <location>
        <begin position="1535"/>
        <end position="1549"/>
    </location>
</feature>
<feature type="glycosylation site" description="N-linked (GlcNAc...) asparagine" evidence="2">
    <location>
        <position position="479"/>
    </location>
</feature>
<feature type="glycosylation site" description="N-linked (GlcNAc...) asparagine" evidence="2">
    <location>
        <position position="769"/>
    </location>
</feature>
<feature type="glycosylation site" description="N-linked (GlcNAc...) asparagine" evidence="2">
    <location>
        <position position="986"/>
    </location>
</feature>
<organism>
    <name type="scientific">Saccharomyces cerevisiae (strain ATCC 204508 / S288c)</name>
    <name type="common">Baker's yeast</name>
    <dbReference type="NCBI Taxonomy" id="559292"/>
    <lineage>
        <taxon>Eukaryota</taxon>
        <taxon>Fungi</taxon>
        <taxon>Dikarya</taxon>
        <taxon>Ascomycota</taxon>
        <taxon>Saccharomycotina</taxon>
        <taxon>Saccharomycetes</taxon>
        <taxon>Saccharomycetales</taxon>
        <taxon>Saccharomycetaceae</taxon>
        <taxon>Saccharomyces</taxon>
    </lineage>
</organism>
<dbReference type="EMBL" id="Z34098">
    <property type="protein sequence ID" value="CAA83988.1"/>
    <property type="molecule type" value="Genomic_DNA"/>
</dbReference>
<dbReference type="EMBL" id="Z49497">
    <property type="protein sequence ID" value="CAA89519.1"/>
    <property type="molecule type" value="Genomic_DNA"/>
</dbReference>
<dbReference type="EMBL" id="BK006943">
    <property type="protein sequence ID" value="DAA08591.1"/>
    <property type="molecule type" value="Genomic_DNA"/>
</dbReference>
<dbReference type="PIR" id="S50705">
    <property type="entry name" value="S50705"/>
</dbReference>
<dbReference type="RefSeq" id="NP_012313.1">
    <property type="nucleotide sequence ID" value="NM_001181655.1"/>
</dbReference>
<dbReference type="SMR" id="P40890"/>
<dbReference type="BioGRID" id="33560">
    <property type="interactions" value="12"/>
</dbReference>
<dbReference type="DIP" id="DIP-6665N"/>
<dbReference type="FunCoup" id="P40890">
    <property type="interactions" value="122"/>
</dbReference>
<dbReference type="IntAct" id="P40890">
    <property type="interactions" value="1"/>
</dbReference>
<dbReference type="STRING" id="4932.YJL222W"/>
<dbReference type="GlyCosmos" id="P40890">
    <property type="glycosylation" value="3 sites, No reported glycans"/>
</dbReference>
<dbReference type="GlyGen" id="P40890">
    <property type="glycosylation" value="3 sites"/>
</dbReference>
<dbReference type="iPTMnet" id="P40890"/>
<dbReference type="PaxDb" id="4932-YJL222W"/>
<dbReference type="PeptideAtlas" id="P40890"/>
<dbReference type="EnsemblFungi" id="YJL222W_mRNA">
    <property type="protein sequence ID" value="YJL222W"/>
    <property type="gene ID" value="YJL222W"/>
</dbReference>
<dbReference type="GeneID" id="853233"/>
<dbReference type="KEGG" id="sce:YJL222W"/>
<dbReference type="AGR" id="SGD:S000003758"/>
<dbReference type="SGD" id="S000003758">
    <property type="gene designation" value="VTH2"/>
</dbReference>
<dbReference type="VEuPathDB" id="FungiDB:YJL222W"/>
<dbReference type="eggNOG" id="KOG3511">
    <property type="taxonomic scope" value="Eukaryota"/>
</dbReference>
<dbReference type="GeneTree" id="ENSGT01030000234563"/>
<dbReference type="HOGENOM" id="CLU_000700_0_0_1"/>
<dbReference type="InParanoid" id="P40890"/>
<dbReference type="OrthoDB" id="443634at2759"/>
<dbReference type="BioCyc" id="YEAST:G3O-31644-MONOMER"/>
<dbReference type="PRO" id="PR:P40890"/>
<dbReference type="Proteomes" id="UP000002311">
    <property type="component" value="Chromosome X"/>
</dbReference>
<dbReference type="RNAct" id="P40890">
    <property type="molecule type" value="protein"/>
</dbReference>
<dbReference type="GO" id="GO:0005829">
    <property type="term" value="C:cytosol"/>
    <property type="evidence" value="ECO:0007669"/>
    <property type="project" value="GOC"/>
</dbReference>
<dbReference type="GO" id="GO:0000324">
    <property type="term" value="C:fungal-type vacuole"/>
    <property type="evidence" value="ECO:0007005"/>
    <property type="project" value="SGD"/>
</dbReference>
<dbReference type="GO" id="GO:0005794">
    <property type="term" value="C:Golgi apparatus"/>
    <property type="evidence" value="ECO:0000318"/>
    <property type="project" value="GO_Central"/>
</dbReference>
<dbReference type="GO" id="GO:0016020">
    <property type="term" value="C:membrane"/>
    <property type="evidence" value="ECO:0000318"/>
    <property type="project" value="GO_Central"/>
</dbReference>
<dbReference type="GO" id="GO:0000166">
    <property type="term" value="F:nucleotide binding"/>
    <property type="evidence" value="ECO:0007669"/>
    <property type="project" value="UniProtKB-KW"/>
</dbReference>
<dbReference type="GO" id="GO:0005048">
    <property type="term" value="F:signal sequence binding"/>
    <property type="evidence" value="ECO:0000316"/>
    <property type="project" value="SGD"/>
</dbReference>
<dbReference type="GO" id="GO:0006895">
    <property type="term" value="P:Golgi to endosome transport"/>
    <property type="evidence" value="ECO:0000318"/>
    <property type="project" value="GO_Central"/>
</dbReference>
<dbReference type="GO" id="GO:0006896">
    <property type="term" value="P:Golgi to vacuole transport"/>
    <property type="evidence" value="ECO:0000316"/>
    <property type="project" value="SGD"/>
</dbReference>
<dbReference type="GO" id="GO:0006623">
    <property type="term" value="P:protein targeting to vacuole"/>
    <property type="evidence" value="ECO:0000316"/>
    <property type="project" value="SGD"/>
</dbReference>
<dbReference type="CDD" id="cd15482">
    <property type="entry name" value="Sialidase_non-viral"/>
    <property type="match status" value="1"/>
</dbReference>
<dbReference type="FunFam" id="3.30.60.270:FF:000005">
    <property type="entry name" value="Sortilin"/>
    <property type="match status" value="1"/>
</dbReference>
<dbReference type="FunFam" id="3.30.60.270:FF:000008">
    <property type="entry name" value="Vacuolar protein sorting/targeting protein PEP1"/>
    <property type="match status" value="1"/>
</dbReference>
<dbReference type="FunFam" id="2.130.10.10:FF:000998">
    <property type="entry name" value="VPS10 homolog 2"/>
    <property type="match status" value="1"/>
</dbReference>
<dbReference type="FunFam" id="2.130.10.10:FF:002485">
    <property type="entry name" value="VPS10 homolog 2"/>
    <property type="match status" value="1"/>
</dbReference>
<dbReference type="Gene3D" id="2.10.70.80">
    <property type="match status" value="1"/>
</dbReference>
<dbReference type="Gene3D" id="2.120.10.10">
    <property type="match status" value="1"/>
</dbReference>
<dbReference type="Gene3D" id="3.30.60.270">
    <property type="match status" value="2"/>
</dbReference>
<dbReference type="Gene3D" id="2.130.10.10">
    <property type="entry name" value="YVTN repeat-like/Quinoprotein amine dehydrogenase"/>
    <property type="match status" value="2"/>
</dbReference>
<dbReference type="InterPro" id="IPR036278">
    <property type="entry name" value="Sialidase_sf"/>
</dbReference>
<dbReference type="InterPro" id="IPR031777">
    <property type="entry name" value="Sortilin_C"/>
</dbReference>
<dbReference type="InterPro" id="IPR031778">
    <property type="entry name" value="Sortilin_N"/>
</dbReference>
<dbReference type="InterPro" id="IPR006581">
    <property type="entry name" value="VPS10"/>
</dbReference>
<dbReference type="InterPro" id="IPR050310">
    <property type="entry name" value="VPS10-sortilin"/>
</dbReference>
<dbReference type="InterPro" id="IPR015943">
    <property type="entry name" value="WD40/YVTN_repeat-like_dom_sf"/>
</dbReference>
<dbReference type="PANTHER" id="PTHR12106">
    <property type="entry name" value="SORTILIN RELATED"/>
    <property type="match status" value="1"/>
</dbReference>
<dbReference type="PANTHER" id="PTHR12106:SF27">
    <property type="entry name" value="SORTILIN-RELATED RECEPTOR"/>
    <property type="match status" value="1"/>
</dbReference>
<dbReference type="Pfam" id="PF15902">
    <property type="entry name" value="Sortilin-Vps10"/>
    <property type="match status" value="2"/>
</dbReference>
<dbReference type="Pfam" id="PF15901">
    <property type="entry name" value="Sortilin_C"/>
    <property type="match status" value="2"/>
</dbReference>
<dbReference type="SMART" id="SM00602">
    <property type="entry name" value="VPS10"/>
    <property type="match status" value="2"/>
</dbReference>
<dbReference type="SUPFAM" id="SSF110296">
    <property type="entry name" value="Oligoxyloglucan reducing end-specific cellobiohydrolase"/>
    <property type="match status" value="1"/>
</dbReference>
<dbReference type="SUPFAM" id="SSF50939">
    <property type="entry name" value="Sialidases"/>
    <property type="match status" value="2"/>
</dbReference>
<proteinExistence type="evidence at protein level"/>
<gene>
    <name type="primary">VTH2</name>
    <name type="ordered locus">YJL222W</name>
    <name type="ORF">HRC1549</name>
    <name type="ORF">J0213</name>
</gene>
<name>VTH2_YEAST</name>
<protein>
    <recommendedName>
        <fullName>VPS10 homolog 2</fullName>
    </recommendedName>
    <alternativeName>
        <fullName>Sortilin VTH2</fullName>
    </alternativeName>
</protein>
<comment type="function">
    <text evidence="5 6">Functions as a sorting receptor in the Golgi compartment required for the intracellular sorting and delivery of soluble vacuolar proteins, like carboxypeptidase Y (CPY) and proteinase A.</text>
</comment>
<comment type="subcellular location">
    <subcellularLocation>
        <location evidence="1">Golgi apparatus</location>
        <location evidence="1">trans-Golgi network membrane</location>
        <topology evidence="1">Single-pass type I membrane protein</topology>
    </subcellularLocation>
</comment>
<comment type="miscellaneous">
    <text evidence="4">Present with 279 molecules/cell in log phase SD medium.</text>
</comment>
<comment type="similarity">
    <text evidence="7">Belongs to the VPS10-related sortilin family.</text>
</comment>
<accession>P40890</accession>
<accession>D6VVX5</accession>
<keyword id="KW-0325">Glycoprotein</keyword>
<keyword id="KW-0333">Golgi apparatus</keyword>
<keyword id="KW-0472">Membrane</keyword>
<keyword id="KW-0547">Nucleotide-binding</keyword>
<keyword id="KW-0653">Protein transport</keyword>
<keyword id="KW-0675">Receptor</keyword>
<keyword id="KW-1185">Reference proteome</keyword>
<keyword id="KW-0677">Repeat</keyword>
<keyword id="KW-0732">Signal</keyword>
<keyword id="KW-0812">Transmembrane</keyword>
<keyword id="KW-1133">Transmembrane helix</keyword>
<keyword id="KW-0813">Transport</keyword>
<sequence length="1549" mass="174402">MALFRALYIIWVFLLIPLSNAEEFTPKVTRTLSRYVFDIVNFDDSNTLIRAEEDSVEISFDAGENWKTIDEIEEPIESFVVDPFRGHDRAFAFVKTAPKFYVTDDQGKSWRPLTIPISEKASNYFCDVTTHPIKKKHLIIRCDLLTIKNSGLMYVGREIYTTNDGVSFSQVKPSFGKIDGHISTARCDFIKSSEDSDLGGNDASILCLFRNTEYIESTGSTIDKSELILSADGGETFKELVQFKDKVVSRYEILKHHVIVLTQDDMYNEMSSTNIWISNDVSTFQVARTPTKIRHVNMGQIHEDSIGRIVLPVSRERDDEDSNQPGAAEVLISDSEGLKFLPINWIPNNQFGYINVAYPGFLKGTFFGSFHPFIEYSDRKRKYSRQKVREETKVSVDNGLTWTNLKVVDRENVDLFGCDVTKPERCSLQTHFYDLRNLNPSAGIMMISGIVGDGSAYNWKEEKTFISRDSGLTWRLVHNSTGLYTTGDLGNIIMYIPYRSNENGDVPSKFYYSLDQGKTWGEYDLIMPIYPYRLVSTISDGSGSKFILTGTSITEDPIFITYSIDFSAVFDYKSCEEGDFEDWNLADGKCVNGAKYKYRRRKQDAQCLVKKAFKDLSLDETPCNSCTGSDYECSFEFVRDAKGDCIPDYNLIALSDICDKSKGKSVLVKPLQLIKGDKCKTPMKIESVDIPCDEIPKEGSSDKEIVTTENKFDFEIKFYQYFDTVADESLVMLNSIGDAYISHDGGQTIKRFDTDGEKIVEIVFNPYFNSSAYLFGSKGNIFLTHDRGYSFMIAKLPEARQLGMPLDFSAKAQDTFIYYGGKNCESILSPECHAVAYLTKDGGETFTEMLDNAIHCEFAGTLFKYPSNDDMVMCQVKEKFSQTRSLVSSTDFFQDDRKTVFENIIGYLSTGGYIIVAVPHEDNELRAYVTNDGAEFTEAKFPYDEDIGKQDAFTILGSEEGSIFLHLATNLESGHDFGNLLKSNSNGTSFVTLEHAVNRNTFGYVDFEKVQGLEGIIITNIVSNSEKVGENKEDEQLKTKITFNDGSDWNFLKPPKKDSEGKKFPCDSVSLDKCSLHLHGYTERKDIRDTYSSGSALGMMFGVGNVGDRLLPYEECSTFLTTDGGETWTEVKKGPHQWEYGDHGGVLVLVPENAETDSISYSTDFGKTWKDYKFCGDKVLVKDIITVPRDSALRFLLFGEAKNMGSGSFRTYTIDFRNIFERQCEFDITGRKRADFKYSPLGSRTGCLFGHKTEFLRKTDEKCFIGNIPLSEFSRNVKNCPCTRQDFECDYNFYKASDGTCKLVKGLSSANGADICKKEPDLIEYYDSSGYRKIPLSTCKGGLKLDAHLAPHPCPGKEKAFREKYSINTGAYALVFVTILLVIFFVAWFVYDRGIRRNGGFSRFEEIRLGDDGLIENNRTDRVVNIIVRLGLCISLITKSAFQRAKAGTAQLSSKFRARFGNKKGATYSSLLHDQLSDEPDGFHEDSNDLSSFRGQGSNSEIEQEDVDTSQQEHTSRTDLLGASNIPDALPARSASHESDLAAARSEDK</sequence>